<reference key="1">
    <citation type="journal article" date="2000" name="J. Biol. Chem.">
        <title>Functional cloning and characterization of a novel nonhomeodomain protein that inhibits the binding of PBX1-HOX complexes to DNA.</title>
        <authorList>
            <person name="Abramovich C."/>
            <person name="Shen W.-F."/>
            <person name="Pineault N."/>
            <person name="Imren S."/>
            <person name="Montpetit B."/>
            <person name="Largman C."/>
            <person name="Humphries R.K."/>
        </authorList>
    </citation>
    <scope>NUCLEOTIDE SEQUENCE [MRNA] (ISOFORM 1)</scope>
    <scope>FUNCTION</scope>
    <scope>TISSUE SPECIFICITY</scope>
    <scope>SUBCELLULAR LOCATION</scope>
    <scope>INTERACTION WITH PBX1; PBX2 AND PBX3</scope>
    <scope>VARIANT ASP-357</scope>
</reference>
<reference key="2">
    <citation type="journal article" date="2004" name="Nat. Genet.">
        <title>Complete sequencing and characterization of 21,243 full-length human cDNAs.</title>
        <authorList>
            <person name="Ota T."/>
            <person name="Suzuki Y."/>
            <person name="Nishikawa T."/>
            <person name="Otsuki T."/>
            <person name="Sugiyama T."/>
            <person name="Irie R."/>
            <person name="Wakamatsu A."/>
            <person name="Hayashi K."/>
            <person name="Sato H."/>
            <person name="Nagai K."/>
            <person name="Kimura K."/>
            <person name="Makita H."/>
            <person name="Sekine M."/>
            <person name="Obayashi M."/>
            <person name="Nishi T."/>
            <person name="Shibahara T."/>
            <person name="Tanaka T."/>
            <person name="Ishii S."/>
            <person name="Yamamoto J."/>
            <person name="Saito K."/>
            <person name="Kawai Y."/>
            <person name="Isono Y."/>
            <person name="Nakamura Y."/>
            <person name="Nagahari K."/>
            <person name="Murakami K."/>
            <person name="Yasuda T."/>
            <person name="Iwayanagi T."/>
            <person name="Wagatsuma M."/>
            <person name="Shiratori A."/>
            <person name="Sudo H."/>
            <person name="Hosoiri T."/>
            <person name="Kaku Y."/>
            <person name="Kodaira H."/>
            <person name="Kondo H."/>
            <person name="Sugawara M."/>
            <person name="Takahashi M."/>
            <person name="Kanda K."/>
            <person name="Yokoi T."/>
            <person name="Furuya T."/>
            <person name="Kikkawa E."/>
            <person name="Omura Y."/>
            <person name="Abe K."/>
            <person name="Kamihara K."/>
            <person name="Katsuta N."/>
            <person name="Sato K."/>
            <person name="Tanikawa M."/>
            <person name="Yamazaki M."/>
            <person name="Ninomiya K."/>
            <person name="Ishibashi T."/>
            <person name="Yamashita H."/>
            <person name="Murakawa K."/>
            <person name="Fujimori K."/>
            <person name="Tanai H."/>
            <person name="Kimata M."/>
            <person name="Watanabe M."/>
            <person name="Hiraoka S."/>
            <person name="Chiba Y."/>
            <person name="Ishida S."/>
            <person name="Ono Y."/>
            <person name="Takiguchi S."/>
            <person name="Watanabe S."/>
            <person name="Yosida M."/>
            <person name="Hotuta T."/>
            <person name="Kusano J."/>
            <person name="Kanehori K."/>
            <person name="Takahashi-Fujii A."/>
            <person name="Hara H."/>
            <person name="Tanase T.-O."/>
            <person name="Nomura Y."/>
            <person name="Togiya S."/>
            <person name="Komai F."/>
            <person name="Hara R."/>
            <person name="Takeuchi K."/>
            <person name="Arita M."/>
            <person name="Imose N."/>
            <person name="Musashino K."/>
            <person name="Yuuki H."/>
            <person name="Oshima A."/>
            <person name="Sasaki N."/>
            <person name="Aotsuka S."/>
            <person name="Yoshikawa Y."/>
            <person name="Matsunawa H."/>
            <person name="Ichihara T."/>
            <person name="Shiohata N."/>
            <person name="Sano S."/>
            <person name="Moriya S."/>
            <person name="Momiyama H."/>
            <person name="Satoh N."/>
            <person name="Takami S."/>
            <person name="Terashima Y."/>
            <person name="Suzuki O."/>
            <person name="Nakagawa S."/>
            <person name="Senoh A."/>
            <person name="Mizoguchi H."/>
            <person name="Goto Y."/>
            <person name="Shimizu F."/>
            <person name="Wakebe H."/>
            <person name="Hishigaki H."/>
            <person name="Watanabe T."/>
            <person name="Sugiyama A."/>
            <person name="Takemoto M."/>
            <person name="Kawakami B."/>
            <person name="Yamazaki M."/>
            <person name="Watanabe K."/>
            <person name="Kumagai A."/>
            <person name="Itakura S."/>
            <person name="Fukuzumi Y."/>
            <person name="Fujimori Y."/>
            <person name="Komiyama M."/>
            <person name="Tashiro H."/>
            <person name="Tanigami A."/>
            <person name="Fujiwara T."/>
            <person name="Ono T."/>
            <person name="Yamada K."/>
            <person name="Fujii Y."/>
            <person name="Ozaki K."/>
            <person name="Hirao M."/>
            <person name="Ohmori Y."/>
            <person name="Kawabata A."/>
            <person name="Hikiji T."/>
            <person name="Kobatake N."/>
            <person name="Inagaki H."/>
            <person name="Ikema Y."/>
            <person name="Okamoto S."/>
            <person name="Okitani R."/>
            <person name="Kawakami T."/>
            <person name="Noguchi S."/>
            <person name="Itoh T."/>
            <person name="Shigeta K."/>
            <person name="Senba T."/>
            <person name="Matsumura K."/>
            <person name="Nakajima Y."/>
            <person name="Mizuno T."/>
            <person name="Morinaga M."/>
            <person name="Sasaki M."/>
            <person name="Togashi T."/>
            <person name="Oyama M."/>
            <person name="Hata H."/>
            <person name="Watanabe M."/>
            <person name="Komatsu T."/>
            <person name="Mizushima-Sugano J."/>
            <person name="Satoh T."/>
            <person name="Shirai Y."/>
            <person name="Takahashi Y."/>
            <person name="Nakagawa K."/>
            <person name="Okumura K."/>
            <person name="Nagase T."/>
            <person name="Nomura N."/>
            <person name="Kikuchi H."/>
            <person name="Masuho Y."/>
            <person name="Yamashita R."/>
            <person name="Nakai K."/>
            <person name="Yada T."/>
            <person name="Nakamura Y."/>
            <person name="Ohara O."/>
            <person name="Isogai T."/>
            <person name="Sugano S."/>
        </authorList>
    </citation>
    <scope>NUCLEOTIDE SEQUENCE [LARGE SCALE MRNA] (ISOFORMS 2 AND 3)</scope>
    <scope>VARIANT ASP-357</scope>
</reference>
<reference key="3">
    <citation type="journal article" date="2006" name="Nature">
        <title>The DNA sequence and biological annotation of human chromosome 1.</title>
        <authorList>
            <person name="Gregory S.G."/>
            <person name="Barlow K.F."/>
            <person name="McLay K.E."/>
            <person name="Kaul R."/>
            <person name="Swarbreck D."/>
            <person name="Dunham A."/>
            <person name="Scott C.E."/>
            <person name="Howe K.L."/>
            <person name="Woodfine K."/>
            <person name="Spencer C.C.A."/>
            <person name="Jones M.C."/>
            <person name="Gillson C."/>
            <person name="Searle S."/>
            <person name="Zhou Y."/>
            <person name="Kokocinski F."/>
            <person name="McDonald L."/>
            <person name="Evans R."/>
            <person name="Phillips K."/>
            <person name="Atkinson A."/>
            <person name="Cooper R."/>
            <person name="Jones C."/>
            <person name="Hall R.E."/>
            <person name="Andrews T.D."/>
            <person name="Lloyd C."/>
            <person name="Ainscough R."/>
            <person name="Almeida J.P."/>
            <person name="Ambrose K.D."/>
            <person name="Anderson F."/>
            <person name="Andrew R.W."/>
            <person name="Ashwell R.I.S."/>
            <person name="Aubin K."/>
            <person name="Babbage A.K."/>
            <person name="Bagguley C.L."/>
            <person name="Bailey J."/>
            <person name="Beasley H."/>
            <person name="Bethel G."/>
            <person name="Bird C.P."/>
            <person name="Bray-Allen S."/>
            <person name="Brown J.Y."/>
            <person name="Brown A.J."/>
            <person name="Buckley D."/>
            <person name="Burton J."/>
            <person name="Bye J."/>
            <person name="Carder C."/>
            <person name="Chapman J.C."/>
            <person name="Clark S.Y."/>
            <person name="Clarke G."/>
            <person name="Clee C."/>
            <person name="Cobley V."/>
            <person name="Collier R.E."/>
            <person name="Corby N."/>
            <person name="Coville G.J."/>
            <person name="Davies J."/>
            <person name="Deadman R."/>
            <person name="Dunn M."/>
            <person name="Earthrowl M."/>
            <person name="Ellington A.G."/>
            <person name="Errington H."/>
            <person name="Frankish A."/>
            <person name="Frankland J."/>
            <person name="French L."/>
            <person name="Garner P."/>
            <person name="Garnett J."/>
            <person name="Gay L."/>
            <person name="Ghori M.R.J."/>
            <person name="Gibson R."/>
            <person name="Gilby L.M."/>
            <person name="Gillett W."/>
            <person name="Glithero R.J."/>
            <person name="Grafham D.V."/>
            <person name="Griffiths C."/>
            <person name="Griffiths-Jones S."/>
            <person name="Grocock R."/>
            <person name="Hammond S."/>
            <person name="Harrison E.S.I."/>
            <person name="Hart E."/>
            <person name="Haugen E."/>
            <person name="Heath P.D."/>
            <person name="Holmes S."/>
            <person name="Holt K."/>
            <person name="Howden P.J."/>
            <person name="Hunt A.R."/>
            <person name="Hunt S.E."/>
            <person name="Hunter G."/>
            <person name="Isherwood J."/>
            <person name="James R."/>
            <person name="Johnson C."/>
            <person name="Johnson D."/>
            <person name="Joy A."/>
            <person name="Kay M."/>
            <person name="Kershaw J.K."/>
            <person name="Kibukawa M."/>
            <person name="Kimberley A.M."/>
            <person name="King A."/>
            <person name="Knights A.J."/>
            <person name="Lad H."/>
            <person name="Laird G."/>
            <person name="Lawlor S."/>
            <person name="Leongamornlert D.A."/>
            <person name="Lloyd D.M."/>
            <person name="Loveland J."/>
            <person name="Lovell J."/>
            <person name="Lush M.J."/>
            <person name="Lyne R."/>
            <person name="Martin S."/>
            <person name="Mashreghi-Mohammadi M."/>
            <person name="Matthews L."/>
            <person name="Matthews N.S.W."/>
            <person name="McLaren S."/>
            <person name="Milne S."/>
            <person name="Mistry S."/>
            <person name="Moore M.J.F."/>
            <person name="Nickerson T."/>
            <person name="O'Dell C.N."/>
            <person name="Oliver K."/>
            <person name="Palmeiri A."/>
            <person name="Palmer S.A."/>
            <person name="Parker A."/>
            <person name="Patel D."/>
            <person name="Pearce A.V."/>
            <person name="Peck A.I."/>
            <person name="Pelan S."/>
            <person name="Phelps K."/>
            <person name="Phillimore B.J."/>
            <person name="Plumb R."/>
            <person name="Rajan J."/>
            <person name="Raymond C."/>
            <person name="Rouse G."/>
            <person name="Saenphimmachak C."/>
            <person name="Sehra H.K."/>
            <person name="Sheridan E."/>
            <person name="Shownkeen R."/>
            <person name="Sims S."/>
            <person name="Skuce C.D."/>
            <person name="Smith M."/>
            <person name="Steward C."/>
            <person name="Subramanian S."/>
            <person name="Sycamore N."/>
            <person name="Tracey A."/>
            <person name="Tromans A."/>
            <person name="Van Helmond Z."/>
            <person name="Wall M."/>
            <person name="Wallis J.M."/>
            <person name="White S."/>
            <person name="Whitehead S.L."/>
            <person name="Wilkinson J.E."/>
            <person name="Willey D.L."/>
            <person name="Williams H."/>
            <person name="Wilming L."/>
            <person name="Wray P.W."/>
            <person name="Wu Z."/>
            <person name="Coulson A."/>
            <person name="Vaudin M."/>
            <person name="Sulston J.E."/>
            <person name="Durbin R.M."/>
            <person name="Hubbard T."/>
            <person name="Wooster R."/>
            <person name="Dunham I."/>
            <person name="Carter N.P."/>
            <person name="McVean G."/>
            <person name="Ross M.T."/>
            <person name="Harrow J."/>
            <person name="Olson M.V."/>
            <person name="Beck S."/>
            <person name="Rogers J."/>
            <person name="Bentley D.R."/>
        </authorList>
    </citation>
    <scope>NUCLEOTIDE SEQUENCE [LARGE SCALE GENOMIC DNA]</scope>
</reference>
<reference key="4">
    <citation type="submission" date="2005-09" db="EMBL/GenBank/DDBJ databases">
        <authorList>
            <person name="Mural R.J."/>
            <person name="Istrail S."/>
            <person name="Sutton G.G."/>
            <person name="Florea L."/>
            <person name="Halpern A.L."/>
            <person name="Mobarry C.M."/>
            <person name="Lippert R."/>
            <person name="Walenz B."/>
            <person name="Shatkay H."/>
            <person name="Dew I."/>
            <person name="Miller J.R."/>
            <person name="Flanigan M.J."/>
            <person name="Edwards N.J."/>
            <person name="Bolanos R."/>
            <person name="Fasulo D."/>
            <person name="Halldorsson B.V."/>
            <person name="Hannenhalli S."/>
            <person name="Turner R."/>
            <person name="Yooseph S."/>
            <person name="Lu F."/>
            <person name="Nusskern D.R."/>
            <person name="Shue B.C."/>
            <person name="Zheng X.H."/>
            <person name="Zhong F."/>
            <person name="Delcher A.L."/>
            <person name="Huson D.H."/>
            <person name="Kravitz S.A."/>
            <person name="Mouchard L."/>
            <person name="Reinert K."/>
            <person name="Remington K.A."/>
            <person name="Clark A.G."/>
            <person name="Waterman M.S."/>
            <person name="Eichler E.E."/>
            <person name="Adams M.D."/>
            <person name="Hunkapiller M.W."/>
            <person name="Myers E.W."/>
            <person name="Venter J.C."/>
        </authorList>
    </citation>
    <scope>NUCLEOTIDE SEQUENCE [LARGE SCALE GENOMIC DNA]</scope>
</reference>
<reference key="5">
    <citation type="journal article" date="2004" name="Genome Res.">
        <title>The status, quality, and expansion of the NIH full-length cDNA project: the Mammalian Gene Collection (MGC).</title>
        <authorList>
            <consortium name="The MGC Project Team"/>
        </authorList>
    </citation>
    <scope>NUCLEOTIDE SEQUENCE [LARGE SCALE MRNA]</scope>
    <source>
        <tissue>Pancreas</tissue>
    </source>
</reference>
<reference key="6">
    <citation type="journal article" date="2002" name="Oncogene">
        <title>Functional characterization of multiple domains involved in the subcellular localization of the hematopoietic Pbx interacting protein (HPIP).</title>
        <authorList>
            <person name="Abramovich C."/>
            <person name="Chavez E.A."/>
            <person name="Lansdorp P.M."/>
            <person name="Humphries R.K."/>
        </authorList>
    </citation>
    <scope>FUNCTION</scope>
    <scope>CHARACTERIZATION</scope>
    <scope>SUBCELLULAR LOCATION</scope>
</reference>
<reference key="7">
    <citation type="journal article" date="2006" name="Cell">
        <title>Global, in vivo, and site-specific phosphorylation dynamics in signaling networks.</title>
        <authorList>
            <person name="Olsen J.V."/>
            <person name="Blagoev B."/>
            <person name="Gnad F."/>
            <person name="Macek B."/>
            <person name="Kumar C."/>
            <person name="Mortensen P."/>
            <person name="Mann M."/>
        </authorList>
    </citation>
    <scope>PHOSPHORYLATION [LARGE SCALE ANALYSIS] AT SER-146; SER-147; SER-148 AND THR-152</scope>
    <scope>IDENTIFICATION BY MASS SPECTROMETRY [LARGE SCALE ANALYSIS]</scope>
    <source>
        <tissue>Cervix carcinoma</tissue>
    </source>
</reference>
<reference key="8">
    <citation type="journal article" date="2006" name="Proc. Natl. Acad. Sci. U.S.A.">
        <title>An inherent role of microtubule network in the action of nuclear receptor.</title>
        <authorList>
            <person name="Manavathi B."/>
            <person name="Acconcia F."/>
            <person name="Rayala S.K."/>
            <person name="Kumar R."/>
        </authorList>
    </citation>
    <scope>FUNCTION</scope>
    <scope>SUBCELLULAR LOCATION</scope>
    <scope>INTERACTION WITH ESR1</scope>
    <scope>MUTAGENESIS OF 615-LEU--LEU-619</scope>
</reference>
<reference key="9">
    <citation type="journal article" date="2008" name="Proc. Natl. Acad. Sci. U.S.A.">
        <title>A quantitative atlas of mitotic phosphorylation.</title>
        <authorList>
            <person name="Dephoure N."/>
            <person name="Zhou C."/>
            <person name="Villen J."/>
            <person name="Beausoleil S.A."/>
            <person name="Bakalarski C.E."/>
            <person name="Elledge S.J."/>
            <person name="Gygi S.P."/>
        </authorList>
    </citation>
    <scope>PHOSPHORYLATION [LARGE SCALE ANALYSIS] AT SER-146; SER-147 AND SER-148</scope>
    <scope>IDENTIFICATION BY MASS SPECTROMETRY [LARGE SCALE ANALYSIS]</scope>
    <source>
        <tissue>Cervix carcinoma</tissue>
    </source>
</reference>
<reference key="10">
    <citation type="journal article" date="2010" name="Sci. Signal.">
        <title>Quantitative phosphoproteomics reveals widespread full phosphorylation site occupancy during mitosis.</title>
        <authorList>
            <person name="Olsen J.V."/>
            <person name="Vermeulen M."/>
            <person name="Santamaria A."/>
            <person name="Kumar C."/>
            <person name="Miller M.L."/>
            <person name="Jensen L.J."/>
            <person name="Gnad F."/>
            <person name="Cox J."/>
            <person name="Jensen T.S."/>
            <person name="Nigg E.A."/>
            <person name="Brunak S."/>
            <person name="Mann M."/>
        </authorList>
    </citation>
    <scope>PHOSPHORYLATION [LARGE SCALE ANALYSIS] AT SER-43</scope>
    <scope>IDENTIFICATION BY MASS SPECTROMETRY [LARGE SCALE ANALYSIS]</scope>
    <source>
        <tissue>Cervix carcinoma</tissue>
    </source>
</reference>
<reference key="11">
    <citation type="journal article" date="2011" name="Sci. Signal.">
        <title>System-wide temporal characterization of the proteome and phosphoproteome of human embryonic stem cell differentiation.</title>
        <authorList>
            <person name="Rigbolt K.T."/>
            <person name="Prokhorova T.A."/>
            <person name="Akimov V."/>
            <person name="Henningsen J."/>
            <person name="Johansen P.T."/>
            <person name="Kratchmarova I."/>
            <person name="Kassem M."/>
            <person name="Mann M."/>
            <person name="Olsen J.V."/>
            <person name="Blagoev B."/>
        </authorList>
    </citation>
    <scope>PHOSPHORYLATION [LARGE SCALE ANALYSIS] AT SER-43</scope>
    <scope>IDENTIFICATION BY MASS SPECTROMETRY [LARGE SCALE ANALYSIS]</scope>
</reference>
<reference key="12">
    <citation type="journal article" date="2013" name="J. Proteome Res.">
        <title>Toward a comprehensive characterization of a human cancer cell phosphoproteome.</title>
        <authorList>
            <person name="Zhou H."/>
            <person name="Di Palma S."/>
            <person name="Preisinger C."/>
            <person name="Peng M."/>
            <person name="Polat A.N."/>
            <person name="Heck A.J."/>
            <person name="Mohammed S."/>
        </authorList>
    </citation>
    <scope>PHOSPHORYLATION [LARGE SCALE ANALYSIS] AT SER-43</scope>
    <scope>IDENTIFICATION BY MASS SPECTROMETRY [LARGE SCALE ANALYSIS]</scope>
    <source>
        <tissue>Cervix carcinoma</tissue>
        <tissue>Erythroleukemia</tissue>
    </source>
</reference>
<reference key="13">
    <citation type="journal article" date="2014" name="J. Proteomics">
        <title>An enzyme assisted RP-RPLC approach for in-depth analysis of human liver phosphoproteome.</title>
        <authorList>
            <person name="Bian Y."/>
            <person name="Song C."/>
            <person name="Cheng K."/>
            <person name="Dong M."/>
            <person name="Wang F."/>
            <person name="Huang J."/>
            <person name="Sun D."/>
            <person name="Wang L."/>
            <person name="Ye M."/>
            <person name="Zou H."/>
        </authorList>
    </citation>
    <scope>PHOSPHORYLATION [LARGE SCALE ANALYSIS] AT SER-43 AND SER-129</scope>
    <scope>IDENTIFICATION BY MASS SPECTROMETRY [LARGE SCALE ANALYSIS]</scope>
    <source>
        <tissue>Liver</tissue>
    </source>
</reference>
<reference key="14">
    <citation type="journal article" date="2015" name="Proteomics">
        <title>N-terminome analysis of the human mitochondrial proteome.</title>
        <authorList>
            <person name="Vaca Jacome A.S."/>
            <person name="Rabilloud T."/>
            <person name="Schaeffer-Reiss C."/>
            <person name="Rompais M."/>
            <person name="Ayoub D."/>
            <person name="Lane L."/>
            <person name="Bairoch A."/>
            <person name="Van Dorsselaer A."/>
            <person name="Carapito C."/>
        </authorList>
    </citation>
    <scope>IDENTIFICATION BY MASS SPECTROMETRY [LARGE SCALE ANALYSIS]</scope>
</reference>
<organism>
    <name type="scientific">Homo sapiens</name>
    <name type="common">Human</name>
    <dbReference type="NCBI Taxonomy" id="9606"/>
    <lineage>
        <taxon>Eukaryota</taxon>
        <taxon>Metazoa</taxon>
        <taxon>Chordata</taxon>
        <taxon>Craniata</taxon>
        <taxon>Vertebrata</taxon>
        <taxon>Euteleostomi</taxon>
        <taxon>Mammalia</taxon>
        <taxon>Eutheria</taxon>
        <taxon>Euarchontoglires</taxon>
        <taxon>Primates</taxon>
        <taxon>Haplorrhini</taxon>
        <taxon>Catarrhini</taxon>
        <taxon>Hominidae</taxon>
        <taxon>Homo</taxon>
    </lineage>
</organism>
<evidence type="ECO:0000250" key="1"/>
<evidence type="ECO:0000250" key="2">
    <source>
        <dbReference type="UniProtKB" id="A2VD12"/>
    </source>
</evidence>
<evidence type="ECO:0000255" key="3"/>
<evidence type="ECO:0000256" key="4">
    <source>
        <dbReference type="SAM" id="MobiDB-lite"/>
    </source>
</evidence>
<evidence type="ECO:0000269" key="5">
    <source>
    </source>
</evidence>
<evidence type="ECO:0000269" key="6">
    <source>
    </source>
</evidence>
<evidence type="ECO:0000269" key="7">
    <source>
    </source>
</evidence>
<evidence type="ECO:0000269" key="8">
    <source>
    </source>
</evidence>
<evidence type="ECO:0000303" key="9">
    <source>
    </source>
</evidence>
<evidence type="ECO:0000305" key="10"/>
<evidence type="ECO:0007744" key="11">
    <source>
    </source>
</evidence>
<evidence type="ECO:0007744" key="12">
    <source>
    </source>
</evidence>
<evidence type="ECO:0007744" key="13">
    <source>
    </source>
</evidence>
<evidence type="ECO:0007744" key="14">
    <source>
    </source>
</evidence>
<evidence type="ECO:0007744" key="15">
    <source>
    </source>
</evidence>
<evidence type="ECO:0007744" key="16">
    <source>
    </source>
</evidence>
<feature type="chain" id="PRO_0000306115" description="Pre-B-cell leukemia transcription factor-interacting protein 1">
    <location>
        <begin position="1"/>
        <end position="731"/>
    </location>
</feature>
<feature type="region of interest" description="Disordered" evidence="4">
    <location>
        <begin position="1"/>
        <end position="155"/>
    </location>
</feature>
<feature type="region of interest" description="Disordered" evidence="4">
    <location>
        <begin position="354"/>
        <end position="377"/>
    </location>
</feature>
<feature type="region of interest" description="Disordered" evidence="4">
    <location>
        <begin position="447"/>
        <end position="572"/>
    </location>
</feature>
<feature type="region of interest" description="Disordered" evidence="4">
    <location>
        <begin position="698"/>
        <end position="731"/>
    </location>
</feature>
<feature type="coiled-coil region" evidence="3">
    <location>
        <begin position="270"/>
        <end position="348"/>
    </location>
</feature>
<feature type="coiled-coil region" evidence="3">
    <location>
        <begin position="377"/>
        <end position="417"/>
    </location>
</feature>
<feature type="short sequence motif" description="Nuclear localization signal" evidence="3">
    <location>
        <begin position="485"/>
        <end position="505"/>
    </location>
</feature>
<feature type="short sequence motif" description="Nuclear localization signal" evidence="3">
    <location>
        <begin position="695"/>
        <end position="720"/>
    </location>
</feature>
<feature type="compositionally biased region" description="Polar residues" evidence="4">
    <location>
        <begin position="1"/>
        <end position="10"/>
    </location>
</feature>
<feature type="compositionally biased region" description="Polar residues" evidence="4">
    <location>
        <begin position="62"/>
        <end position="75"/>
    </location>
</feature>
<feature type="compositionally biased region" description="Polar residues" evidence="4">
    <location>
        <begin position="121"/>
        <end position="132"/>
    </location>
</feature>
<feature type="compositionally biased region" description="Basic and acidic residues" evidence="4">
    <location>
        <begin position="364"/>
        <end position="375"/>
    </location>
</feature>
<feature type="compositionally biased region" description="Basic and acidic residues" evidence="4">
    <location>
        <begin position="472"/>
        <end position="499"/>
    </location>
</feature>
<feature type="compositionally biased region" description="Basic and acidic residues" evidence="4">
    <location>
        <begin position="508"/>
        <end position="543"/>
    </location>
</feature>
<feature type="compositionally biased region" description="Basic and acidic residues" evidence="4">
    <location>
        <begin position="551"/>
        <end position="569"/>
    </location>
</feature>
<feature type="compositionally biased region" description="Basic residues" evidence="4">
    <location>
        <begin position="698"/>
        <end position="707"/>
    </location>
</feature>
<feature type="modified residue" description="Phosphoserine" evidence="13 14 15 16">
    <location>
        <position position="43"/>
    </location>
</feature>
<feature type="modified residue" description="Phosphoserine" evidence="16">
    <location>
        <position position="129"/>
    </location>
</feature>
<feature type="modified residue" description="Phosphoserine" evidence="11 12">
    <location>
        <position position="146"/>
    </location>
</feature>
<feature type="modified residue" description="Phosphoserine" evidence="11 12">
    <location>
        <position position="147"/>
    </location>
</feature>
<feature type="modified residue" description="Phosphoserine" evidence="11 12">
    <location>
        <position position="148"/>
    </location>
</feature>
<feature type="modified residue" description="Phosphothreonine" evidence="11">
    <location>
        <position position="152"/>
    </location>
</feature>
<feature type="modified residue" description="Phosphoserine" evidence="2">
    <location>
        <position position="567"/>
    </location>
</feature>
<feature type="splice variant" id="VSP_028418" description="In isoform 2." evidence="9">
    <location>
        <begin position="1"/>
        <end position="29"/>
    </location>
</feature>
<feature type="splice variant" id="VSP_028419" description="In isoform 3." evidence="9">
    <location>
        <begin position="566"/>
        <end position="634"/>
    </location>
</feature>
<feature type="sequence variant" id="VAR_051263" description="In dbSNP:rs2061690.">
    <original>G</original>
    <variation>D</variation>
    <location>
        <position position="356"/>
    </location>
</feature>
<feature type="sequence variant" id="VAR_035265" description="In dbSNP:rs2061690." evidence="5 7">
    <original>G</original>
    <variation>D</variation>
    <location>
        <position position="357"/>
    </location>
</feature>
<feature type="mutagenesis site" description="Reduces interaction with ESR1." evidence="8">
    <original>LASLL</original>
    <variation>AASAA</variation>
    <location>
        <begin position="615"/>
        <end position="619"/>
    </location>
</feature>
<feature type="sequence conflict" description="In Ref. 2; BAB14059." evidence="10" ref="2">
    <original>I</original>
    <variation>F</variation>
    <location>
        <position position="139"/>
    </location>
</feature>
<feature type="sequence conflict" description="In Ref. 1; AAG02026 and 2; BAB14471." evidence="10" ref="1 2">
    <original>M</original>
    <variation>I</variation>
    <location>
        <position position="268"/>
    </location>
</feature>
<feature type="sequence conflict" description="In Ref. 2; BAB14059." evidence="10" ref="2">
    <original>L</original>
    <variation>P</variation>
    <location>
        <position position="381"/>
    </location>
</feature>
<feature type="sequence conflict" description="In Ref. 1; AAG02026." evidence="10" ref="1">
    <original>A</original>
    <variation>P</variation>
    <location>
        <position position="595"/>
    </location>
</feature>
<dbReference type="EMBL" id="AF221521">
    <property type="protein sequence ID" value="AAG02026.1"/>
    <property type="molecule type" value="mRNA"/>
</dbReference>
<dbReference type="EMBL" id="AK022497">
    <property type="protein sequence ID" value="BAB14059.1"/>
    <property type="molecule type" value="mRNA"/>
</dbReference>
<dbReference type="EMBL" id="AK023219">
    <property type="protein sequence ID" value="BAB14471.1"/>
    <property type="molecule type" value="mRNA"/>
</dbReference>
<dbReference type="EMBL" id="AL451085">
    <property type="status" value="NOT_ANNOTATED_CDS"/>
    <property type="molecule type" value="Genomic_DNA"/>
</dbReference>
<dbReference type="EMBL" id="CH471121">
    <property type="protein sequence ID" value="EAW53175.1"/>
    <property type="molecule type" value="Genomic_DNA"/>
</dbReference>
<dbReference type="EMBL" id="CH471121">
    <property type="protein sequence ID" value="EAW53176.1"/>
    <property type="molecule type" value="Genomic_DNA"/>
</dbReference>
<dbReference type="EMBL" id="BC016852">
    <property type="protein sequence ID" value="AAH16852.1"/>
    <property type="molecule type" value="mRNA"/>
</dbReference>
<dbReference type="CCDS" id="CCDS1074.1">
    <molecule id="Q96AQ6-1"/>
</dbReference>
<dbReference type="CCDS" id="CCDS81382.1">
    <molecule id="Q96AQ6-2"/>
</dbReference>
<dbReference type="RefSeq" id="NP_001304663.1">
    <molecule id="Q96AQ6-2"/>
    <property type="nucleotide sequence ID" value="NM_001317734.2"/>
</dbReference>
<dbReference type="RefSeq" id="NP_001304664.1">
    <property type="nucleotide sequence ID" value="NM_001317735.1"/>
</dbReference>
<dbReference type="RefSeq" id="NP_065385.2">
    <molecule id="Q96AQ6-1"/>
    <property type="nucleotide sequence ID" value="NM_020524.3"/>
</dbReference>
<dbReference type="SMR" id="Q96AQ6"/>
<dbReference type="BioGRID" id="121486">
    <property type="interactions" value="265"/>
</dbReference>
<dbReference type="CORUM" id="Q96AQ6"/>
<dbReference type="DIP" id="DIP-46922N"/>
<dbReference type="FunCoup" id="Q96AQ6">
    <property type="interactions" value="2122"/>
</dbReference>
<dbReference type="IntAct" id="Q96AQ6">
    <property type="interactions" value="190"/>
</dbReference>
<dbReference type="MINT" id="Q96AQ6"/>
<dbReference type="STRING" id="9606.ENSP00000357448"/>
<dbReference type="GlyConnect" id="1622">
    <property type="glycosylation" value="3 N-Linked glycans (1 site)"/>
</dbReference>
<dbReference type="GlyCosmos" id="Q96AQ6">
    <property type="glycosylation" value="1 site, 3 glycans"/>
</dbReference>
<dbReference type="GlyGen" id="Q96AQ6">
    <property type="glycosylation" value="2 sites, 13 N-linked glycans (1 site), 1 O-linked glycan (1 site)"/>
</dbReference>
<dbReference type="iPTMnet" id="Q96AQ6"/>
<dbReference type="PhosphoSitePlus" id="Q96AQ6"/>
<dbReference type="SwissPalm" id="Q96AQ6"/>
<dbReference type="BioMuta" id="PBXIP1"/>
<dbReference type="DMDM" id="74751749"/>
<dbReference type="jPOST" id="Q96AQ6"/>
<dbReference type="MassIVE" id="Q96AQ6"/>
<dbReference type="PaxDb" id="9606-ENSP00000357448"/>
<dbReference type="PeptideAtlas" id="Q96AQ6"/>
<dbReference type="ProteomicsDB" id="75987">
    <molecule id="Q96AQ6-1"/>
</dbReference>
<dbReference type="ProteomicsDB" id="75988">
    <molecule id="Q96AQ6-2"/>
</dbReference>
<dbReference type="ProteomicsDB" id="75989">
    <molecule id="Q96AQ6-3"/>
</dbReference>
<dbReference type="Pumba" id="Q96AQ6"/>
<dbReference type="Antibodypedia" id="1813">
    <property type="antibodies" value="177 antibodies from 27 providers"/>
</dbReference>
<dbReference type="DNASU" id="57326"/>
<dbReference type="Ensembl" id="ENST00000368463.8">
    <molecule id="Q96AQ6-1"/>
    <property type="protein sequence ID" value="ENSP00000357448.3"/>
    <property type="gene ID" value="ENSG00000163346.17"/>
</dbReference>
<dbReference type="Ensembl" id="ENST00000368465.5">
    <molecule id="Q96AQ6-2"/>
    <property type="protein sequence ID" value="ENSP00000357450.1"/>
    <property type="gene ID" value="ENSG00000163346.17"/>
</dbReference>
<dbReference type="GeneID" id="57326"/>
<dbReference type="KEGG" id="hsa:57326"/>
<dbReference type="MANE-Select" id="ENST00000368463.8">
    <property type="protein sequence ID" value="ENSP00000357448.3"/>
    <property type="RefSeq nucleotide sequence ID" value="NM_020524.4"/>
    <property type="RefSeq protein sequence ID" value="NP_065385.2"/>
</dbReference>
<dbReference type="UCSC" id="uc001ffr.4">
    <molecule id="Q96AQ6-1"/>
    <property type="organism name" value="human"/>
</dbReference>
<dbReference type="AGR" id="HGNC:21199"/>
<dbReference type="CTD" id="57326"/>
<dbReference type="DisGeNET" id="57326"/>
<dbReference type="GeneCards" id="PBXIP1"/>
<dbReference type="HGNC" id="HGNC:21199">
    <property type="gene designation" value="PBXIP1"/>
</dbReference>
<dbReference type="HPA" id="ENSG00000163346">
    <property type="expression patterns" value="Tissue enriched (choroid)"/>
</dbReference>
<dbReference type="MIM" id="618819">
    <property type="type" value="gene"/>
</dbReference>
<dbReference type="neXtProt" id="NX_Q96AQ6"/>
<dbReference type="OpenTargets" id="ENSG00000163346"/>
<dbReference type="PharmGKB" id="PA134956095"/>
<dbReference type="VEuPathDB" id="HostDB:ENSG00000163346"/>
<dbReference type="eggNOG" id="ENOG502QRIW">
    <property type="taxonomic scope" value="Eukaryota"/>
</dbReference>
<dbReference type="GeneTree" id="ENSGT00940000162147"/>
<dbReference type="HOGENOM" id="CLU_024505_0_0_1"/>
<dbReference type="InParanoid" id="Q96AQ6"/>
<dbReference type="OMA" id="GCARQEG"/>
<dbReference type="OrthoDB" id="8947092at2759"/>
<dbReference type="PAN-GO" id="Q96AQ6">
    <property type="GO annotations" value="2 GO annotations based on evolutionary models"/>
</dbReference>
<dbReference type="PhylomeDB" id="Q96AQ6"/>
<dbReference type="TreeFam" id="TF333202"/>
<dbReference type="PathwayCommons" id="Q96AQ6"/>
<dbReference type="SignaLink" id="Q96AQ6"/>
<dbReference type="SIGNOR" id="Q96AQ6"/>
<dbReference type="BioGRID-ORCS" id="57326">
    <property type="hits" value="23 hits in 1165 CRISPR screens"/>
</dbReference>
<dbReference type="CD-CODE" id="FB4E32DD">
    <property type="entry name" value="Presynaptic clusters and postsynaptic densities"/>
</dbReference>
<dbReference type="ChiTaRS" id="PBXIP1">
    <property type="organism name" value="human"/>
</dbReference>
<dbReference type="GenomeRNAi" id="57326"/>
<dbReference type="Pharos" id="Q96AQ6">
    <property type="development level" value="Tbio"/>
</dbReference>
<dbReference type="PRO" id="PR:Q96AQ6"/>
<dbReference type="Proteomes" id="UP000005640">
    <property type="component" value="Chromosome 1"/>
</dbReference>
<dbReference type="RNAct" id="Q96AQ6">
    <property type="molecule type" value="protein"/>
</dbReference>
<dbReference type="Bgee" id="ENSG00000163346">
    <property type="expression patterns" value="Expressed in saphenous vein and 208 other cell types or tissues"/>
</dbReference>
<dbReference type="ExpressionAtlas" id="Q96AQ6">
    <property type="expression patterns" value="baseline and differential"/>
</dbReference>
<dbReference type="GO" id="GO:0000785">
    <property type="term" value="C:chromatin"/>
    <property type="evidence" value="ECO:0007669"/>
    <property type="project" value="Ensembl"/>
</dbReference>
<dbReference type="GO" id="GO:0005829">
    <property type="term" value="C:cytosol"/>
    <property type="evidence" value="ECO:0000314"/>
    <property type="project" value="HPA"/>
</dbReference>
<dbReference type="GO" id="GO:0005874">
    <property type="term" value="C:microtubule"/>
    <property type="evidence" value="ECO:0007669"/>
    <property type="project" value="UniProtKB-KW"/>
</dbReference>
<dbReference type="GO" id="GO:0005654">
    <property type="term" value="C:nucleoplasm"/>
    <property type="evidence" value="ECO:0000314"/>
    <property type="project" value="HPA"/>
</dbReference>
<dbReference type="GO" id="GO:0005634">
    <property type="term" value="C:nucleus"/>
    <property type="evidence" value="ECO:0000314"/>
    <property type="project" value="UniProtKB"/>
</dbReference>
<dbReference type="GO" id="GO:0005667">
    <property type="term" value="C:transcription regulator complex"/>
    <property type="evidence" value="ECO:0007669"/>
    <property type="project" value="Ensembl"/>
</dbReference>
<dbReference type="GO" id="GO:0140297">
    <property type="term" value="F:DNA-binding transcription factor binding"/>
    <property type="evidence" value="ECO:0000353"/>
    <property type="project" value="UniProtKB"/>
</dbReference>
<dbReference type="GO" id="GO:0003713">
    <property type="term" value="F:transcription coactivator activity"/>
    <property type="evidence" value="ECO:0007669"/>
    <property type="project" value="Ensembl"/>
</dbReference>
<dbReference type="GO" id="GO:0003712">
    <property type="term" value="F:transcription coregulator activity"/>
    <property type="evidence" value="ECO:0000318"/>
    <property type="project" value="GO_Central"/>
</dbReference>
<dbReference type="GO" id="GO:0003714">
    <property type="term" value="F:transcription corepressor activity"/>
    <property type="evidence" value="ECO:0000314"/>
    <property type="project" value="UniProtKB"/>
</dbReference>
<dbReference type="GO" id="GO:0061975">
    <property type="term" value="P:articular cartilage development"/>
    <property type="evidence" value="ECO:0007669"/>
    <property type="project" value="Ensembl"/>
</dbReference>
<dbReference type="GO" id="GO:0007155">
    <property type="term" value="P:cell adhesion"/>
    <property type="evidence" value="ECO:0007669"/>
    <property type="project" value="Ensembl"/>
</dbReference>
<dbReference type="GO" id="GO:0016477">
    <property type="term" value="P:cell migration"/>
    <property type="evidence" value="ECO:0007669"/>
    <property type="project" value="Ensembl"/>
</dbReference>
<dbReference type="GO" id="GO:0022617">
    <property type="term" value="P:extracellular matrix disassembly"/>
    <property type="evidence" value="ECO:0007669"/>
    <property type="project" value="Ensembl"/>
</dbReference>
<dbReference type="GO" id="GO:1901148">
    <property type="term" value="P:gene expression involved in extracellular matrix organization"/>
    <property type="evidence" value="ECO:0007669"/>
    <property type="project" value="Ensembl"/>
</dbReference>
<dbReference type="GO" id="GO:0030097">
    <property type="term" value="P:hemopoiesis"/>
    <property type="evidence" value="ECO:0000270"/>
    <property type="project" value="UniProtKB"/>
</dbReference>
<dbReference type="GO" id="GO:0045892">
    <property type="term" value="P:negative regulation of DNA-templated transcription"/>
    <property type="evidence" value="ECO:0000314"/>
    <property type="project" value="UniProtKB"/>
</dbReference>
<dbReference type="GO" id="GO:1902732">
    <property type="term" value="P:positive regulation of chondrocyte proliferation"/>
    <property type="evidence" value="ECO:0007669"/>
    <property type="project" value="Ensembl"/>
</dbReference>
<dbReference type="GO" id="GO:0030177">
    <property type="term" value="P:positive regulation of Wnt signaling pathway"/>
    <property type="evidence" value="ECO:0007669"/>
    <property type="project" value="Ensembl"/>
</dbReference>
<dbReference type="GO" id="GO:0002532">
    <property type="term" value="P:production of molecular mediator involved in inflammatory response"/>
    <property type="evidence" value="ECO:0007669"/>
    <property type="project" value="Ensembl"/>
</dbReference>
<dbReference type="GO" id="GO:0006355">
    <property type="term" value="P:regulation of DNA-templated transcription"/>
    <property type="evidence" value="ECO:0000318"/>
    <property type="project" value="GO_Central"/>
</dbReference>
<dbReference type="InterPro" id="IPR051990">
    <property type="entry name" value="CCPG1/PBIP1"/>
</dbReference>
<dbReference type="PANTHER" id="PTHR28638">
    <property type="entry name" value="CELL CYCLE PROGRESSION PROTEIN 1"/>
    <property type="match status" value="1"/>
</dbReference>
<dbReference type="PANTHER" id="PTHR28638:SF1">
    <property type="entry name" value="PRE-B-CELL LEUKEMIA TRANSCRIPTION FACTOR-INTERACTING PROTEIN 1"/>
    <property type="match status" value="1"/>
</dbReference>
<name>PBIP1_HUMAN</name>
<keyword id="KW-0025">Alternative splicing</keyword>
<keyword id="KW-0175">Coiled coil</keyword>
<keyword id="KW-0963">Cytoplasm</keyword>
<keyword id="KW-0206">Cytoskeleton</keyword>
<keyword id="KW-0493">Microtubule</keyword>
<keyword id="KW-0539">Nucleus</keyword>
<keyword id="KW-0597">Phosphoprotein</keyword>
<keyword id="KW-1267">Proteomics identification</keyword>
<keyword id="KW-1185">Reference proteome</keyword>
<comment type="function">
    <text evidence="5 6 8">Regulator of pre-B-cell leukemia transcription factors (BPXs) function. Inhibits the binding of PBX1-HOX complex to DNA and blocks the transcriptional activity of E2A-PBX1. Tethers estrogen receptor-alpha (ESR1) to microtubules and allows them to influence estrogen receptors-alpha signaling.</text>
</comment>
<comment type="subunit">
    <text evidence="1 5 8">Interacts with TEX11 (By similarity). Interacts with ESR1, PBX1, PBX2 and PBX3.</text>
</comment>
<comment type="interaction">
    <interactant intactId="EBI-740845">
        <id>Q96AQ6</id>
    </interactant>
    <interactant intactId="EBI-1748958">
        <id>P49069</id>
        <label>CAMLG</label>
    </interactant>
    <organismsDiffer>false</organismsDiffer>
    <experiments>3</experiments>
</comment>
<comment type="interaction">
    <interactant intactId="EBI-740845">
        <id>Q96AQ6</id>
    </interactant>
    <interactant intactId="EBI-395261">
        <id>P24863</id>
        <label>CCNC</label>
    </interactant>
    <organismsDiffer>false</organismsDiffer>
    <experiments>5</experiments>
</comment>
<comment type="interaction">
    <interactant intactId="EBI-740845">
        <id>Q96AQ6</id>
    </interactant>
    <interactant intactId="EBI-77321">
        <id>Q9UER7</id>
        <label>DAXX</label>
    </interactant>
    <organismsDiffer>false</organismsDiffer>
    <experiments>3</experiments>
</comment>
<comment type="interaction">
    <interactant intactId="EBI-740845">
        <id>Q96AQ6</id>
    </interactant>
    <interactant intactId="EBI-745369">
        <id>Q9H4E7</id>
        <label>DEF6</label>
    </interactant>
    <organismsDiffer>false</organismsDiffer>
    <experiments>3</experiments>
</comment>
<comment type="interaction">
    <interactant intactId="EBI-740845">
        <id>Q96AQ6</id>
    </interactant>
    <interactant intactId="EBI-10172181">
        <id>Q53SE7</id>
        <label>FLJ13057</label>
    </interactant>
    <organismsDiffer>false</organismsDiffer>
    <experiments>3</experiments>
</comment>
<comment type="interaction">
    <interactant intactId="EBI-740845">
        <id>Q96AQ6</id>
    </interactant>
    <interactant intactId="EBI-746969">
        <id>Q9H0R8</id>
        <label>GABARAPL1</label>
    </interactant>
    <organismsDiffer>false</organismsDiffer>
    <experiments>3</experiments>
</comment>
<comment type="interaction">
    <interactant intactId="EBI-740845">
        <id>Q96AQ6</id>
    </interactant>
    <interactant intactId="EBI-2548508">
        <id>Q96IK5</id>
        <label>GMCL1</label>
    </interactant>
    <organismsDiffer>false</organismsDiffer>
    <experiments>8</experiments>
</comment>
<comment type="interaction">
    <interactant intactId="EBI-740845">
        <id>Q96AQ6</id>
    </interactant>
    <interactant intactId="EBI-12012928">
        <id>P60371</id>
        <label>KRTAP10-6</label>
    </interactant>
    <organismsDiffer>false</organismsDiffer>
    <experiments>3</experiments>
</comment>
<comment type="interaction">
    <interactant intactId="EBI-740845">
        <id>Q96AQ6</id>
    </interactant>
    <interactant intactId="EBI-8473670">
        <id>O95447</id>
        <label>LCA5L</label>
    </interactant>
    <organismsDiffer>false</organismsDiffer>
    <experiments>3</experiments>
</comment>
<comment type="interaction">
    <interactant intactId="EBI-740845">
        <id>Q96AQ6</id>
    </interactant>
    <interactant intactId="EBI-724076">
        <id>Q99750</id>
        <label>MDFI</label>
    </interactant>
    <organismsDiffer>false</organismsDiffer>
    <experiments>4</experiments>
</comment>
<comment type="interaction">
    <interactant intactId="EBI-740845">
        <id>Q96AQ6</id>
    </interactant>
    <interactant intactId="EBI-399246">
        <id>Q9UBU8</id>
        <label>MORF4L1</label>
    </interactant>
    <organismsDiffer>false</organismsDiffer>
    <experiments>3</experiments>
</comment>
<comment type="interaction">
    <interactant intactId="EBI-740845">
        <id>Q96AQ6</id>
    </interactant>
    <interactant intactId="EBI-10288852">
        <id>Q9UBU8-2</id>
        <label>MORF4L1</label>
    </interactant>
    <organismsDiffer>false</organismsDiffer>
    <experiments>3</experiments>
</comment>
<comment type="interaction">
    <interactant intactId="EBI-740845">
        <id>Q96AQ6</id>
    </interactant>
    <interactant intactId="EBI-9089276">
        <id>Q8NI37</id>
        <label>PPTC7</label>
    </interactant>
    <organismsDiffer>false</organismsDiffer>
    <experiments>3</experiments>
</comment>
<comment type="interaction">
    <interactant intactId="EBI-740845">
        <id>Q96AQ6</id>
    </interactant>
    <interactant intactId="EBI-347996">
        <id>O43765</id>
        <label>SGTA</label>
    </interactant>
    <organismsDiffer>false</organismsDiffer>
    <experiments>4</experiments>
</comment>
<comment type="interaction">
    <interactant intactId="EBI-740845">
        <id>Q96AQ6</id>
    </interactant>
    <interactant intactId="EBI-10173939">
        <id>Q9UMX0-2</id>
        <label>UBQLN1</label>
    </interactant>
    <organismsDiffer>false</organismsDiffer>
    <experiments>3</experiments>
</comment>
<comment type="interaction">
    <interactant intactId="EBI-740845">
        <id>Q96AQ6</id>
    </interactant>
    <interactant intactId="EBI-712969">
        <id>Q9Y3C0</id>
        <label>WASHC3</label>
    </interactant>
    <organismsDiffer>false</organismsDiffer>
    <experiments>4</experiments>
</comment>
<comment type="interaction">
    <interactant intactId="EBI-15606280">
        <id>Q96AQ6-1</id>
    </interactant>
    <interactant intactId="EBI-78473">
        <id>P03372</id>
        <label>ESR1</label>
    </interactant>
    <organismsDiffer>false</organismsDiffer>
    <experiments>3</experiments>
</comment>
<comment type="interaction">
    <interactant intactId="EBI-15606280">
        <id>Q96AQ6-1</id>
    </interactant>
    <interactant intactId="EBI-15606245">
        <id>P03372-1</id>
        <label>ESR1</label>
    </interactant>
    <organismsDiffer>false</organismsDiffer>
    <experiments>5</experiments>
</comment>
<comment type="subcellular location">
    <subcellularLocation>
        <location evidence="6 8">Cytoplasm</location>
        <location evidence="6 8">Cytoskeleton</location>
    </subcellularLocation>
    <subcellularLocation>
        <location evidence="5 6">Nucleus</location>
    </subcellularLocation>
    <text>Shuttles between the nucleus and the cytosol (PubMed:12360403). Mainly localized in the cytoplasm, associated with microtubules (PubMed:10825160, PubMed:12360403). Detected in small amounts in the nucleus (PubMed:10825160).</text>
</comment>
<comment type="alternative products">
    <event type="alternative splicing"/>
    <isoform>
        <id>Q96AQ6-1</id>
        <name>1</name>
        <sequence type="displayed"/>
    </isoform>
    <isoform>
        <id>Q96AQ6-2</id>
        <name>2</name>
        <sequence type="described" ref="VSP_028418"/>
    </isoform>
    <isoform>
        <id>Q96AQ6-3</id>
        <name>3</name>
        <sequence type="described" ref="VSP_028419"/>
    </isoform>
</comment>
<comment type="tissue specificity">
    <text evidence="5">Expressed in early hematopoietic precursors.</text>
</comment>
<comment type="domain">
    <text>The C-terminal domain (AA 443-731) contains a nuclear export signal.</text>
</comment>
<comment type="domain">
    <text>Association to the cytoskeleton through a N-terminal leucine rich-domain (AA 190-218).</text>
</comment>
<gene>
    <name type="primary">PBXIP1</name>
    <name type="synonym">HPIP</name>
</gene>
<protein>
    <recommendedName>
        <fullName>Pre-B-cell leukemia transcription factor-interacting protein 1</fullName>
    </recommendedName>
    <alternativeName>
        <fullName>Hematopoietic PBX-interacting protein</fullName>
    </alternativeName>
</protein>
<accession>Q96AQ6</accession>
<accession>Q5T174</accession>
<accession>Q5T176</accession>
<accession>Q9H8X6</accession>
<accession>Q9HA02</accession>
<accession>Q9HD85</accession>
<proteinExistence type="evidence at protein level"/>
<sequence>MASCPDSDNSWVLAGSESLPVETLGPASRMDPESERALQAPHSPSKTDGKELAGTMDGEGTLFQTESPQSGSILTEETEVKGTLEGDVCGVEPPGPGDTVVQGDLQETTVVTGLGPDTQDLEGQSPPQSLPSTPKAAWIREEGRCSSSDDDTDVDMEGLRRRRGREAGPPQPMVPLAVENQAGGEGAGGELGISLNMCLLGALVLLGLGVLLFSGGLSESETGPMEEVERQVLPDPEVLEAVGDRQDGLREQLQAPVPPDSVPSLQNMGLLLDKLAKENQDIRLLQAQLQAQKEELQSLMHQPKGLEEENAQLRGALQQGEAFQRALESELQQLRARLQGLEADCVRGPDGVCLSGGRGPQGDKAIREQGPREQEPELSFLKQKEQLEAEAQALRQELERQRRLLGSVQQDLERSLQDASRGDPAHAGLAELGHRLAQKLQGLENWGQDPGVSANASKAWHQKSHFQNSREWSGKEKWWDGQRDRKAEHWKHKKEESGRERKKNWGGQEDREPAGRWKEGRPRVEESGSKKEGKRQGPKEPPRKSGSFHSSGEKQKQPRWREGTKDSHDPLPSWAELLRPKYRAPQGCSGVDECARQEGLTFFGTELAPVRQQELASLLRTYLARLPWAGQLTKELPLSPAFFGEDGIFRHDRLRFRDFVDALEDSLEEVAVQQTGDDDEVDDFEDFIFSHFFGDKALKKRSGKKDKHSQSPRAAGPREGHSHSHHHHHRG</sequence>